<accession>B5FID6</accession>
<dbReference type="EMBL" id="CP001144">
    <property type="protein sequence ID" value="ACH77911.1"/>
    <property type="molecule type" value="Genomic_DNA"/>
</dbReference>
<dbReference type="RefSeq" id="WP_000092497.1">
    <property type="nucleotide sequence ID" value="NC_011205.1"/>
</dbReference>
<dbReference type="SMR" id="B5FID6"/>
<dbReference type="KEGG" id="sed:SeD_A1873"/>
<dbReference type="HOGENOM" id="CLU_078181_0_0_6"/>
<dbReference type="Proteomes" id="UP000008322">
    <property type="component" value="Chromosome"/>
</dbReference>
<dbReference type="GO" id="GO:0005737">
    <property type="term" value="C:cytoplasm"/>
    <property type="evidence" value="ECO:0007669"/>
    <property type="project" value="UniProtKB-SubCell"/>
</dbReference>
<dbReference type="GO" id="GO:0003677">
    <property type="term" value="F:DNA binding"/>
    <property type="evidence" value="ECO:0007669"/>
    <property type="project" value="UniProtKB-UniRule"/>
</dbReference>
<dbReference type="GO" id="GO:0006274">
    <property type="term" value="P:DNA replication termination"/>
    <property type="evidence" value="ECO:0007669"/>
    <property type="project" value="UniProtKB-UniRule"/>
</dbReference>
<dbReference type="Gene3D" id="3.30.54.10">
    <property type="match status" value="1"/>
</dbReference>
<dbReference type="Gene3D" id="3.50.14.10">
    <property type="entry name" value="Replication terminator Tus, domain 1 superfamily/Replication terminator Tus"/>
    <property type="match status" value="1"/>
</dbReference>
<dbReference type="HAMAP" id="MF_00483">
    <property type="entry name" value="Rep_term_Tus"/>
    <property type="match status" value="1"/>
</dbReference>
<dbReference type="InterPro" id="IPR008865">
    <property type="entry name" value="DNA_replication_term_site-bd"/>
</dbReference>
<dbReference type="InterPro" id="IPR036381">
    <property type="entry name" value="Tus_dom1"/>
</dbReference>
<dbReference type="InterPro" id="IPR036384">
    <property type="entry name" value="Tus_sf"/>
</dbReference>
<dbReference type="NCBIfam" id="TIGR02648">
    <property type="entry name" value="rep_term_tus"/>
    <property type="match status" value="1"/>
</dbReference>
<dbReference type="Pfam" id="PF05472">
    <property type="entry name" value="Ter"/>
    <property type="match status" value="1"/>
</dbReference>
<dbReference type="SUPFAM" id="SSF56596">
    <property type="entry name" value="Replication terminator protein (Tus)"/>
    <property type="match status" value="1"/>
</dbReference>
<keyword id="KW-0963">Cytoplasm</keyword>
<keyword id="KW-0235">DNA replication</keyword>
<keyword id="KW-0238">DNA-binding</keyword>
<organism>
    <name type="scientific">Salmonella dublin (strain CT_02021853)</name>
    <dbReference type="NCBI Taxonomy" id="439851"/>
    <lineage>
        <taxon>Bacteria</taxon>
        <taxon>Pseudomonadati</taxon>
        <taxon>Pseudomonadota</taxon>
        <taxon>Gammaproteobacteria</taxon>
        <taxon>Enterobacterales</taxon>
        <taxon>Enterobacteriaceae</taxon>
        <taxon>Salmonella</taxon>
    </lineage>
</organism>
<feature type="chain" id="PRO_1000126043" description="DNA replication terminus site-binding protein">
    <location>
        <begin position="1"/>
        <end position="309"/>
    </location>
</feature>
<comment type="function">
    <text evidence="1">Trans-acting protein required for termination of DNA replication. Binds to DNA replication terminator sequences (terA to terF) to prevent the passage of replication forks. The termination efficiency will be affected by the affinity of this protein for the terminator sequence.</text>
</comment>
<comment type="subcellular location">
    <subcellularLocation>
        <location evidence="1">Cytoplasm</location>
    </subcellularLocation>
</comment>
<comment type="similarity">
    <text evidence="1">Belongs to the Tus family.</text>
</comment>
<evidence type="ECO:0000255" key="1">
    <source>
        <dbReference type="HAMAP-Rule" id="MF_00483"/>
    </source>
</evidence>
<reference key="1">
    <citation type="journal article" date="2011" name="J. Bacteriol.">
        <title>Comparative genomics of 28 Salmonella enterica isolates: evidence for CRISPR-mediated adaptive sublineage evolution.</title>
        <authorList>
            <person name="Fricke W.F."/>
            <person name="Mammel M.K."/>
            <person name="McDermott P.F."/>
            <person name="Tartera C."/>
            <person name="White D.G."/>
            <person name="Leclerc J.E."/>
            <person name="Ravel J."/>
            <person name="Cebula T.A."/>
        </authorList>
    </citation>
    <scope>NUCLEOTIDE SEQUENCE [LARGE SCALE GENOMIC DNA]</scope>
    <source>
        <strain>CT_02021853</strain>
    </source>
</reference>
<gene>
    <name evidence="1" type="primary">tus</name>
    <name type="ordered locus">SeD_A1873</name>
</gene>
<proteinExistence type="inferred from homology"/>
<protein>
    <recommendedName>
        <fullName evidence="1">DNA replication terminus site-binding protein</fullName>
        <shortName evidence="1">Ter-binding protein</shortName>
    </recommendedName>
</protein>
<sequence length="309" mass="35487">MSRYDLVERLNGTFRQIEQHLAALTDNLQQHSLLIARVFSLPQVTKEAEHAPLDTIEVTQHLGKEAETLALRHYRHLFIQQQSENRSSKAAVRLPGVLCYQVDNATQLDLENQVQRINQLKTTFEQMVTVESGLPSAARFEWVHRHLPGLITLNAYRTLTLINNPATIRFGWANKHIIKNLSRDEVLSQLKKSLASPRSVPPWTREQWQFKLEREYQDIAALPQQARLKIKRPVKVQPIARIWYKGQQKQVQHACPTPIIALINTDNGAGVPDIGGLENYDADNIQHRFKPQAQPLRLIIPRLHLYVAD</sequence>
<name>TUS_SALDC</name>